<accession>A1UL70</accession>
<keyword id="KW-0963">Cytoplasm</keyword>
<keyword id="KW-0238">DNA-binding</keyword>
<keyword id="KW-0597">Phosphoprotein</keyword>
<keyword id="KW-0346">Stress response</keyword>
<keyword id="KW-0804">Transcription</keyword>
<keyword id="KW-0805">Transcription regulation</keyword>
<keyword id="KW-0902">Two-component regulatory system</keyword>
<keyword id="KW-0843">Virulence</keyword>
<dbReference type="EMBL" id="CP000518">
    <property type="protein sequence ID" value="ABL93578.1"/>
    <property type="molecule type" value="Genomic_DNA"/>
</dbReference>
<dbReference type="SMR" id="A1UL70"/>
<dbReference type="STRING" id="189918.Mkms_4387"/>
<dbReference type="KEGG" id="mkm:Mkms_4387"/>
<dbReference type="HOGENOM" id="CLU_000445_30_1_11"/>
<dbReference type="OrthoDB" id="4760923at2"/>
<dbReference type="GO" id="GO:0005829">
    <property type="term" value="C:cytosol"/>
    <property type="evidence" value="ECO:0007669"/>
    <property type="project" value="TreeGrafter"/>
</dbReference>
<dbReference type="GO" id="GO:0032993">
    <property type="term" value="C:protein-DNA complex"/>
    <property type="evidence" value="ECO:0007669"/>
    <property type="project" value="TreeGrafter"/>
</dbReference>
<dbReference type="GO" id="GO:0000156">
    <property type="term" value="F:phosphorelay response regulator activity"/>
    <property type="evidence" value="ECO:0007669"/>
    <property type="project" value="TreeGrafter"/>
</dbReference>
<dbReference type="GO" id="GO:0000976">
    <property type="term" value="F:transcription cis-regulatory region binding"/>
    <property type="evidence" value="ECO:0007669"/>
    <property type="project" value="TreeGrafter"/>
</dbReference>
<dbReference type="GO" id="GO:0006355">
    <property type="term" value="P:regulation of DNA-templated transcription"/>
    <property type="evidence" value="ECO:0007669"/>
    <property type="project" value="InterPro"/>
</dbReference>
<dbReference type="CDD" id="cd17627">
    <property type="entry name" value="REC_OmpR_PrrA-like"/>
    <property type="match status" value="1"/>
</dbReference>
<dbReference type="CDD" id="cd00383">
    <property type="entry name" value="trans_reg_C"/>
    <property type="match status" value="1"/>
</dbReference>
<dbReference type="FunFam" id="3.40.50.2300:FF:000001">
    <property type="entry name" value="DNA-binding response regulator PhoB"/>
    <property type="match status" value="1"/>
</dbReference>
<dbReference type="FunFam" id="1.10.10.10:FF:000005">
    <property type="entry name" value="Two-component system response regulator"/>
    <property type="match status" value="1"/>
</dbReference>
<dbReference type="Gene3D" id="3.40.50.2300">
    <property type="match status" value="1"/>
</dbReference>
<dbReference type="Gene3D" id="6.10.250.690">
    <property type="match status" value="1"/>
</dbReference>
<dbReference type="Gene3D" id="1.10.10.10">
    <property type="entry name" value="Winged helix-like DNA-binding domain superfamily/Winged helix DNA-binding domain"/>
    <property type="match status" value="1"/>
</dbReference>
<dbReference type="InterPro" id="IPR011006">
    <property type="entry name" value="CheY-like_superfamily"/>
</dbReference>
<dbReference type="InterPro" id="IPR001867">
    <property type="entry name" value="OmpR/PhoB-type_DNA-bd"/>
</dbReference>
<dbReference type="InterPro" id="IPR016032">
    <property type="entry name" value="Sig_transdc_resp-reg_C-effctor"/>
</dbReference>
<dbReference type="InterPro" id="IPR001789">
    <property type="entry name" value="Sig_transdc_resp-reg_receiver"/>
</dbReference>
<dbReference type="InterPro" id="IPR039420">
    <property type="entry name" value="WalR-like"/>
</dbReference>
<dbReference type="InterPro" id="IPR036388">
    <property type="entry name" value="WH-like_DNA-bd_sf"/>
</dbReference>
<dbReference type="PANTHER" id="PTHR48111">
    <property type="entry name" value="REGULATOR OF RPOS"/>
    <property type="match status" value="1"/>
</dbReference>
<dbReference type="PANTHER" id="PTHR48111:SF22">
    <property type="entry name" value="REGULATOR OF RPOS"/>
    <property type="match status" value="1"/>
</dbReference>
<dbReference type="Pfam" id="PF00072">
    <property type="entry name" value="Response_reg"/>
    <property type="match status" value="1"/>
</dbReference>
<dbReference type="Pfam" id="PF00486">
    <property type="entry name" value="Trans_reg_C"/>
    <property type="match status" value="1"/>
</dbReference>
<dbReference type="SMART" id="SM00448">
    <property type="entry name" value="REC"/>
    <property type="match status" value="1"/>
</dbReference>
<dbReference type="SMART" id="SM00862">
    <property type="entry name" value="Trans_reg_C"/>
    <property type="match status" value="1"/>
</dbReference>
<dbReference type="SUPFAM" id="SSF46894">
    <property type="entry name" value="C-terminal effector domain of the bipartite response regulators"/>
    <property type="match status" value="1"/>
</dbReference>
<dbReference type="SUPFAM" id="SSF52172">
    <property type="entry name" value="CheY-like"/>
    <property type="match status" value="1"/>
</dbReference>
<dbReference type="PROSITE" id="PS51755">
    <property type="entry name" value="OMPR_PHOB"/>
    <property type="match status" value="1"/>
</dbReference>
<dbReference type="PROSITE" id="PS50110">
    <property type="entry name" value="RESPONSE_REGULATORY"/>
    <property type="match status" value="1"/>
</dbReference>
<protein>
    <recommendedName>
        <fullName>Response regulator MprA</fullName>
    </recommendedName>
    <alternativeName>
        <fullName>Mycobacterial persistence regulator A</fullName>
    </alternativeName>
</protein>
<feature type="chain" id="PRO_0000308425" description="Response regulator MprA">
    <location>
        <begin position="1"/>
        <end position="230"/>
    </location>
</feature>
<feature type="domain" description="Response regulatory" evidence="2">
    <location>
        <begin position="4"/>
        <end position="118"/>
    </location>
</feature>
<feature type="DNA-binding region" description="OmpR/PhoB-type" evidence="3">
    <location>
        <begin position="129"/>
        <end position="227"/>
    </location>
</feature>
<feature type="modified residue" description="4-aspartylphosphate" evidence="2">
    <location>
        <position position="48"/>
    </location>
</feature>
<name>MPRA_MYCSK</name>
<reference key="1">
    <citation type="submission" date="2006-12" db="EMBL/GenBank/DDBJ databases">
        <title>Complete sequence of chromosome of Mycobacterium sp. KMS.</title>
        <authorList>
            <consortium name="US DOE Joint Genome Institute"/>
            <person name="Copeland A."/>
            <person name="Lucas S."/>
            <person name="Lapidus A."/>
            <person name="Barry K."/>
            <person name="Detter J.C."/>
            <person name="Glavina del Rio T."/>
            <person name="Hammon N."/>
            <person name="Israni S."/>
            <person name="Dalin E."/>
            <person name="Tice H."/>
            <person name="Pitluck S."/>
            <person name="Kiss H."/>
            <person name="Brettin T."/>
            <person name="Bruce D."/>
            <person name="Han C."/>
            <person name="Tapia R."/>
            <person name="Gilna P."/>
            <person name="Schmutz J."/>
            <person name="Larimer F."/>
            <person name="Land M."/>
            <person name="Hauser L."/>
            <person name="Kyrpides N."/>
            <person name="Mikhailova N."/>
            <person name="Miller C.D."/>
            <person name="Richardson P."/>
        </authorList>
    </citation>
    <scope>NUCLEOTIDE SEQUENCE [LARGE SCALE GENOMIC DNA]</scope>
    <source>
        <strain>KMS</strain>
    </source>
</reference>
<evidence type="ECO:0000250" key="1"/>
<evidence type="ECO:0000255" key="2">
    <source>
        <dbReference type="PROSITE-ProRule" id="PRU00169"/>
    </source>
</evidence>
<evidence type="ECO:0000255" key="3">
    <source>
        <dbReference type="PROSITE-ProRule" id="PRU01091"/>
    </source>
</evidence>
<evidence type="ECO:0000305" key="4"/>
<proteinExistence type="inferred from homology"/>
<organism>
    <name type="scientific">Mycobacterium sp. (strain KMS)</name>
    <dbReference type="NCBI Taxonomy" id="189918"/>
    <lineage>
        <taxon>Bacteria</taxon>
        <taxon>Bacillati</taxon>
        <taxon>Actinomycetota</taxon>
        <taxon>Actinomycetes</taxon>
        <taxon>Mycobacteriales</taxon>
        <taxon>Mycobacteriaceae</taxon>
        <taxon>Mycobacterium</taxon>
    </lineage>
</organism>
<comment type="function">
    <text evidence="1">Member of the two-component regulatory system MprB/MprA which contributes to maintaining a balance among several systems involved in stress resistance and is required for establishment and maintenance of persistent infection in the host. Functions as a transcriptional regulator that recognizes a 19-bp nucleotide motif comprizing two loosely conserved 8-bp direct DNA-binding motif repeats separated by a 3-bp spacer region (By similarity).</text>
</comment>
<comment type="subcellular location">
    <subcellularLocation>
        <location evidence="4">Cytoplasm</location>
    </subcellularLocation>
</comment>
<comment type="PTM">
    <text evidence="1">Phosphorylated and dephosphorylated by MprB.</text>
</comment>
<gene>
    <name type="primary">mprA</name>
    <name type="ordered locus">Mkms_4387</name>
</gene>
<sequence length="230" mass="25698">MPVRILVVDDDRAVRESLRRSLSFNGYSVELAQDGVEALDLIANNRPDAVVLDVMMPRLDGLEVCRQLRSTGDDLPILVLTARDSVSERVAGLDAGADDYLPKPFALEELLARMRALLRRTSPDEGPDSPALTFLDLTLDPVTREVTRGSRQISLTRTEFALLEMLIANPRRVLTRSRILEEVWGFDFPTSGNALEVYIGYLRRKTEASGEPRLIHTVRGVGYVLRETPP</sequence>